<feature type="signal peptide" evidence="2">
    <location>
        <begin position="1"/>
        <end position="25"/>
    </location>
</feature>
<feature type="chain" id="PRO_0000018383" description="Non-specific lipid-transfer protein 4.1">
    <location>
        <begin position="26"/>
        <end position="115"/>
    </location>
</feature>
<feature type="disulfide bond" evidence="1">
    <location>
        <begin position="29"/>
        <end position="77"/>
    </location>
</feature>
<feature type="disulfide bond" evidence="1">
    <location>
        <begin position="39"/>
        <end position="54"/>
    </location>
</feature>
<feature type="disulfide bond" evidence="1">
    <location>
        <begin position="55"/>
        <end position="97"/>
    </location>
</feature>
<feature type="disulfide bond" evidence="1">
    <location>
        <begin position="75"/>
        <end position="111"/>
    </location>
</feature>
<proteinExistence type="evidence at protein level"/>
<dbReference type="EMBL" id="X68654">
    <property type="protein sequence ID" value="CAA48621.1"/>
    <property type="molecule type" value="mRNA"/>
</dbReference>
<dbReference type="PIR" id="S45371">
    <property type="entry name" value="S45371"/>
</dbReference>
<dbReference type="SMR" id="Q43767"/>
<dbReference type="GO" id="GO:0008289">
    <property type="term" value="F:lipid binding"/>
    <property type="evidence" value="ECO:0007669"/>
    <property type="project" value="UniProtKB-KW"/>
</dbReference>
<dbReference type="GO" id="GO:0006869">
    <property type="term" value="P:lipid transport"/>
    <property type="evidence" value="ECO:0007669"/>
    <property type="project" value="InterPro"/>
</dbReference>
<dbReference type="CDD" id="cd01960">
    <property type="entry name" value="nsLTP1"/>
    <property type="match status" value="1"/>
</dbReference>
<dbReference type="Gene3D" id="1.10.110.10">
    <property type="entry name" value="Plant lipid-transfer and hydrophobic proteins"/>
    <property type="match status" value="1"/>
</dbReference>
<dbReference type="InterPro" id="IPR036312">
    <property type="entry name" value="Bifun_inhib/LTP/seed_sf"/>
</dbReference>
<dbReference type="InterPro" id="IPR016140">
    <property type="entry name" value="Bifunc_inhib/LTP/seed_store"/>
</dbReference>
<dbReference type="InterPro" id="IPR000528">
    <property type="entry name" value="Plant_nsLTP"/>
</dbReference>
<dbReference type="PANTHER" id="PTHR33076">
    <property type="entry name" value="NON-SPECIFIC LIPID-TRANSFER PROTEIN 2-RELATED"/>
    <property type="match status" value="1"/>
</dbReference>
<dbReference type="Pfam" id="PF00234">
    <property type="entry name" value="Tryp_alpha_amyl"/>
    <property type="match status" value="1"/>
</dbReference>
<dbReference type="PRINTS" id="PR00382">
    <property type="entry name" value="LIPIDTRNSFER"/>
</dbReference>
<dbReference type="SMART" id="SM00499">
    <property type="entry name" value="AAI"/>
    <property type="match status" value="1"/>
</dbReference>
<dbReference type="SUPFAM" id="SSF47699">
    <property type="entry name" value="Bifunctional inhibitor/lipid-transfer protein/seed storage 2S albumin"/>
    <property type="match status" value="1"/>
</dbReference>
<dbReference type="PROSITE" id="PS00597">
    <property type="entry name" value="PLANT_LTP"/>
    <property type="match status" value="1"/>
</dbReference>
<reference key="1">
    <citation type="journal article" date="1993" name="Plant J.">
        <title>Developmental and pathogen-induced expression of three barley genes encoding lipid transfer proteins.</title>
        <authorList>
            <person name="Molina A."/>
            <person name="Garcia-Olmedo F."/>
        </authorList>
    </citation>
    <scope>NUCLEOTIDE SEQUENCE [MRNA]</scope>
    <source>
        <strain>cv. Bomi</strain>
        <tissue>Etiolated leaf</tissue>
    </source>
</reference>
<reference key="2">
    <citation type="journal article" date="1993" name="FEBS Lett.">
        <title>Lipid transfer proteins (nsLTPs) from barley and maize leaves are potent inhibitors of bacterial and fungal plant pathogens.</title>
        <authorList>
            <person name="Molina A."/>
            <person name="Segura A."/>
            <person name="Garcia-Olmedo F."/>
        </authorList>
    </citation>
    <scope>PROTEIN SEQUENCE OF 26-115</scope>
    <source>
        <strain>cv. Bomi</strain>
        <tissue>Leaf</tissue>
    </source>
</reference>
<keyword id="KW-0903">Direct protein sequencing</keyword>
<keyword id="KW-1015">Disulfide bond</keyword>
<keyword id="KW-0446">Lipid-binding</keyword>
<keyword id="KW-0732">Signal</keyword>
<keyword id="KW-0813">Transport</keyword>
<sequence length="115" mass="11085">MARAAASQLVLVALVAAMLLVAADAAISCGQVSSALSPCISYARGNGAKPPAACCSGVKRLAGAAQSTADKQAACKCIKSAAGGLNAGKAAGIPSMCGVSVPYAISASVDCSKIR</sequence>
<gene>
    <name type="primary">LTP4.1</name>
    <name type="synonym">LTP4</name>
</gene>
<name>NLT41_HORVU</name>
<comment type="function">
    <text>Plant non-specific lipid-transfer proteins transfer phospholipids as well as galactolipids across membranes. May play a role in wax or cutin deposition in the cell walls of expanding epidermal cells and certain secretory tissues.</text>
</comment>
<comment type="similarity">
    <text evidence="3">Belongs to the plant LTP family.</text>
</comment>
<protein>
    <recommendedName>
        <fullName>Non-specific lipid-transfer protein 4.1</fullName>
        <shortName>LTP 4.1</shortName>
    </recommendedName>
    <alternativeName>
        <fullName>CW-21</fullName>
        <shortName>CW21</shortName>
    </alternativeName>
</protein>
<evidence type="ECO:0000250" key="1"/>
<evidence type="ECO:0000269" key="2">
    <source>
    </source>
</evidence>
<evidence type="ECO:0000305" key="3"/>
<accession>Q43767</accession>
<organism>
    <name type="scientific">Hordeum vulgare</name>
    <name type="common">Barley</name>
    <dbReference type="NCBI Taxonomy" id="4513"/>
    <lineage>
        <taxon>Eukaryota</taxon>
        <taxon>Viridiplantae</taxon>
        <taxon>Streptophyta</taxon>
        <taxon>Embryophyta</taxon>
        <taxon>Tracheophyta</taxon>
        <taxon>Spermatophyta</taxon>
        <taxon>Magnoliopsida</taxon>
        <taxon>Liliopsida</taxon>
        <taxon>Poales</taxon>
        <taxon>Poaceae</taxon>
        <taxon>BOP clade</taxon>
        <taxon>Pooideae</taxon>
        <taxon>Triticodae</taxon>
        <taxon>Triticeae</taxon>
        <taxon>Hordeinae</taxon>
        <taxon>Hordeum</taxon>
    </lineage>
</organism>